<proteinExistence type="inferred from homology"/>
<keyword id="KW-0150">Chloroplast</keyword>
<keyword id="KW-0934">Plastid</keyword>
<keyword id="KW-0687">Ribonucleoprotein</keyword>
<keyword id="KW-0689">Ribosomal protein</keyword>
<name>RK33_JASNU</name>
<organism>
    <name type="scientific">Jasminum nudiflorum</name>
    <name type="common">Winter jasmine</name>
    <dbReference type="NCBI Taxonomy" id="126431"/>
    <lineage>
        <taxon>Eukaryota</taxon>
        <taxon>Viridiplantae</taxon>
        <taxon>Streptophyta</taxon>
        <taxon>Embryophyta</taxon>
        <taxon>Tracheophyta</taxon>
        <taxon>Spermatophyta</taxon>
        <taxon>Magnoliopsida</taxon>
        <taxon>eudicotyledons</taxon>
        <taxon>Gunneridae</taxon>
        <taxon>Pentapetalae</taxon>
        <taxon>asterids</taxon>
        <taxon>lamiids</taxon>
        <taxon>Lamiales</taxon>
        <taxon>Oleaceae</taxon>
        <taxon>Jasmineae</taxon>
        <taxon>Jasminum</taxon>
    </lineage>
</organism>
<protein>
    <recommendedName>
        <fullName evidence="1">Large ribosomal subunit protein bL33c</fullName>
    </recommendedName>
    <alternativeName>
        <fullName evidence="2">50S ribosomal protein L33, chloroplastic</fullName>
    </alternativeName>
</protein>
<gene>
    <name evidence="1" type="primary">rpl33</name>
    <name type="ORF">JNC0740</name>
</gene>
<evidence type="ECO:0000255" key="1">
    <source>
        <dbReference type="HAMAP-Rule" id="MF_00294"/>
    </source>
</evidence>
<evidence type="ECO:0000305" key="2"/>
<comment type="subcellular location">
    <subcellularLocation>
        <location>Plastid</location>
        <location>Chloroplast</location>
    </subcellularLocation>
</comment>
<comment type="similarity">
    <text evidence="1">Belongs to the bacterial ribosomal protein bL33 family.</text>
</comment>
<sequence length="66" mass="7650">MAKGKDAPRVRVILECTGCVRNAVSRGVSRYITQKNRHNTSKQLELRKFCPYCHKHMIHGEIKINK</sequence>
<geneLocation type="chloroplast"/>
<accession>Q06RB1</accession>
<dbReference type="EMBL" id="DQ673255">
    <property type="protein sequence ID" value="ABG74648.1"/>
    <property type="molecule type" value="Genomic_DNA"/>
</dbReference>
<dbReference type="RefSeq" id="YP_778510.1">
    <property type="nucleotide sequence ID" value="NC_008407.1"/>
</dbReference>
<dbReference type="GeneID" id="4319729"/>
<dbReference type="GO" id="GO:0009507">
    <property type="term" value="C:chloroplast"/>
    <property type="evidence" value="ECO:0007669"/>
    <property type="project" value="UniProtKB-SubCell"/>
</dbReference>
<dbReference type="GO" id="GO:1990904">
    <property type="term" value="C:ribonucleoprotein complex"/>
    <property type="evidence" value="ECO:0007669"/>
    <property type="project" value="UniProtKB-KW"/>
</dbReference>
<dbReference type="GO" id="GO:0005840">
    <property type="term" value="C:ribosome"/>
    <property type="evidence" value="ECO:0007669"/>
    <property type="project" value="UniProtKB-KW"/>
</dbReference>
<dbReference type="GO" id="GO:0003735">
    <property type="term" value="F:structural constituent of ribosome"/>
    <property type="evidence" value="ECO:0007669"/>
    <property type="project" value="InterPro"/>
</dbReference>
<dbReference type="GO" id="GO:0006412">
    <property type="term" value="P:translation"/>
    <property type="evidence" value="ECO:0007669"/>
    <property type="project" value="UniProtKB-UniRule"/>
</dbReference>
<dbReference type="Gene3D" id="2.20.28.120">
    <property type="entry name" value="Ribosomal protein L33"/>
    <property type="match status" value="1"/>
</dbReference>
<dbReference type="HAMAP" id="MF_00294">
    <property type="entry name" value="Ribosomal_bL33"/>
    <property type="match status" value="1"/>
</dbReference>
<dbReference type="InterPro" id="IPR001705">
    <property type="entry name" value="Ribosomal_bL33"/>
</dbReference>
<dbReference type="InterPro" id="IPR018264">
    <property type="entry name" value="Ribosomal_bL33_CS"/>
</dbReference>
<dbReference type="InterPro" id="IPR038584">
    <property type="entry name" value="Ribosomal_bL33_sf"/>
</dbReference>
<dbReference type="InterPro" id="IPR011332">
    <property type="entry name" value="Ribosomal_zn-bd"/>
</dbReference>
<dbReference type="NCBIfam" id="NF001764">
    <property type="entry name" value="PRK00504.1"/>
    <property type="match status" value="1"/>
</dbReference>
<dbReference type="NCBIfam" id="NF001860">
    <property type="entry name" value="PRK00595.1"/>
    <property type="match status" value="1"/>
</dbReference>
<dbReference type="NCBIfam" id="TIGR01023">
    <property type="entry name" value="rpmG_bact"/>
    <property type="match status" value="1"/>
</dbReference>
<dbReference type="PANTHER" id="PTHR43168">
    <property type="entry name" value="50S RIBOSOMAL PROTEIN L33, CHLOROPLASTIC"/>
    <property type="match status" value="1"/>
</dbReference>
<dbReference type="PANTHER" id="PTHR43168:SF2">
    <property type="entry name" value="LARGE RIBOSOMAL SUBUNIT PROTEIN BL33C"/>
    <property type="match status" value="1"/>
</dbReference>
<dbReference type="Pfam" id="PF00471">
    <property type="entry name" value="Ribosomal_L33"/>
    <property type="match status" value="1"/>
</dbReference>
<dbReference type="SUPFAM" id="SSF57829">
    <property type="entry name" value="Zn-binding ribosomal proteins"/>
    <property type="match status" value="1"/>
</dbReference>
<dbReference type="PROSITE" id="PS00582">
    <property type="entry name" value="RIBOSOMAL_L33"/>
    <property type="match status" value="1"/>
</dbReference>
<feature type="chain" id="PRO_0000276506" description="Large ribosomal subunit protein bL33c">
    <location>
        <begin position="1"/>
        <end position="66"/>
    </location>
</feature>
<reference key="1">
    <citation type="journal article" date="2007" name="Mol. Biol. Evol.">
        <title>Gene relocations within chloroplast genomes of Jasminum and Menodora (Oleaceae) are due to multiple, overlapping inversions.</title>
        <authorList>
            <person name="Lee H.-L."/>
            <person name="Jansen R.K."/>
            <person name="Chumley T.W."/>
            <person name="Kim K.-J."/>
        </authorList>
    </citation>
    <scope>NUCLEOTIDE SEQUENCE [LARGE SCALE GENOMIC DNA]</scope>
</reference>